<comment type="function">
    <text evidence="1">May play an important regulatory role in corticotrophs.</text>
</comment>
<comment type="subcellular location">
    <subcellularLocation>
        <location evidence="3">Endoplasmic reticulum</location>
    </subcellularLocation>
    <subcellularLocation>
        <location evidence="3">Golgi apparatus</location>
    </subcellularLocation>
    <subcellularLocation>
        <location evidence="3">Cytoplasmic vesicle</location>
        <location evidence="3">Secretory vesicle lumen</location>
    </subcellularLocation>
    <text evidence="2 3">Found in the lumen of secretory vesicles (dense core vesicles, DCV). However, seems to be retained intracellularly and not secreted.</text>
</comment>
<comment type="similarity">
    <text evidence="6">Belongs to the RESP18 family.</text>
</comment>
<evidence type="ECO:0000250" key="1"/>
<evidence type="ECO:0000250" key="2">
    <source>
        <dbReference type="UniProtKB" id="P47939"/>
    </source>
</evidence>
<evidence type="ECO:0000250" key="3">
    <source>
        <dbReference type="UniProtKB" id="P47940"/>
    </source>
</evidence>
<evidence type="ECO:0000255" key="4"/>
<evidence type="ECO:0000256" key="5">
    <source>
        <dbReference type="SAM" id="MobiDB-lite"/>
    </source>
</evidence>
<evidence type="ECO:0000305" key="6"/>
<proteinExistence type="evidence at transcript level"/>
<gene>
    <name type="primary">RESP18</name>
</gene>
<feature type="signal peptide" evidence="4">
    <location>
        <begin position="1"/>
        <end position="29"/>
    </location>
</feature>
<feature type="chain" id="PRO_0000336990" description="Regulated endocrine-specific protein 18">
    <location>
        <begin position="30"/>
        <end position="174"/>
    </location>
</feature>
<feature type="region of interest" description="Disordered" evidence="5">
    <location>
        <begin position="88"/>
        <end position="113"/>
    </location>
</feature>
<name>RES18_BOVIN</name>
<organism>
    <name type="scientific">Bos taurus</name>
    <name type="common">Bovine</name>
    <dbReference type="NCBI Taxonomy" id="9913"/>
    <lineage>
        <taxon>Eukaryota</taxon>
        <taxon>Metazoa</taxon>
        <taxon>Chordata</taxon>
        <taxon>Craniata</taxon>
        <taxon>Vertebrata</taxon>
        <taxon>Euteleostomi</taxon>
        <taxon>Mammalia</taxon>
        <taxon>Eutheria</taxon>
        <taxon>Laurasiatheria</taxon>
        <taxon>Artiodactyla</taxon>
        <taxon>Ruminantia</taxon>
        <taxon>Pecora</taxon>
        <taxon>Bovidae</taxon>
        <taxon>Bovinae</taxon>
        <taxon>Bos</taxon>
    </lineage>
</organism>
<reference key="1">
    <citation type="submission" date="2006-10" db="EMBL/GenBank/DDBJ databases">
        <authorList>
            <consortium name="NIH - Mammalian Gene Collection (MGC) project"/>
        </authorList>
    </citation>
    <scope>NUCLEOTIDE SEQUENCE [LARGE SCALE MRNA]</scope>
    <source>
        <strain>Hereford</strain>
        <tissue>Fetal pons</tissue>
    </source>
</reference>
<accession>A0JNL8</accession>
<keyword id="KW-0968">Cytoplasmic vesicle</keyword>
<keyword id="KW-0256">Endoplasmic reticulum</keyword>
<keyword id="KW-0333">Golgi apparatus</keyword>
<keyword id="KW-1185">Reference proteome</keyword>
<keyword id="KW-0732">Signal</keyword>
<protein>
    <recommendedName>
        <fullName>Regulated endocrine-specific protein 18</fullName>
    </recommendedName>
</protein>
<dbReference type="EMBL" id="BC126772">
    <property type="protein sequence ID" value="AAI26773.1"/>
    <property type="molecule type" value="mRNA"/>
</dbReference>
<dbReference type="RefSeq" id="NP_001071365.1">
    <property type="nucleotide sequence ID" value="NM_001077897.2"/>
</dbReference>
<dbReference type="RefSeq" id="XP_059748925.1">
    <property type="nucleotide sequence ID" value="XM_059892942.1"/>
</dbReference>
<dbReference type="FunCoup" id="A0JNL8">
    <property type="interactions" value="5"/>
</dbReference>
<dbReference type="STRING" id="9913.ENSBTAP00000014474"/>
<dbReference type="PaxDb" id="9913-ENSBTAP00000014474"/>
<dbReference type="Ensembl" id="ENSBTAT00000014474.6">
    <property type="protein sequence ID" value="ENSBTAP00000014474.4"/>
    <property type="gene ID" value="ENSBTAG00000010897.6"/>
</dbReference>
<dbReference type="GeneID" id="510410"/>
<dbReference type="KEGG" id="bta:510410"/>
<dbReference type="CTD" id="389075"/>
<dbReference type="VEuPathDB" id="HostDB:ENSBTAG00000010897"/>
<dbReference type="VGNC" id="VGNC:33875">
    <property type="gene designation" value="RESP18"/>
</dbReference>
<dbReference type="eggNOG" id="KOG0793">
    <property type="taxonomic scope" value="Eukaryota"/>
</dbReference>
<dbReference type="GeneTree" id="ENSGT00390000008124"/>
<dbReference type="HOGENOM" id="CLU_106769_1_0_1"/>
<dbReference type="InParanoid" id="A0JNL8"/>
<dbReference type="OMA" id="GRIQHPL"/>
<dbReference type="OrthoDB" id="9837799at2759"/>
<dbReference type="TreeFam" id="TF338242"/>
<dbReference type="Proteomes" id="UP000009136">
    <property type="component" value="Chromosome 2"/>
</dbReference>
<dbReference type="Bgee" id="ENSBTAG00000010897">
    <property type="expression patterns" value="Expressed in adenohypophysis and 69 other cell types or tissues"/>
</dbReference>
<dbReference type="GO" id="GO:0031410">
    <property type="term" value="C:cytoplasmic vesicle"/>
    <property type="evidence" value="ECO:0007669"/>
    <property type="project" value="UniProtKB-KW"/>
</dbReference>
<dbReference type="GO" id="GO:0005783">
    <property type="term" value="C:endoplasmic reticulum"/>
    <property type="evidence" value="ECO:0000318"/>
    <property type="project" value="GO_Central"/>
</dbReference>
<dbReference type="GO" id="GO:0005794">
    <property type="term" value="C:Golgi apparatus"/>
    <property type="evidence" value="ECO:0007669"/>
    <property type="project" value="UniProtKB-SubCell"/>
</dbReference>
<dbReference type="GO" id="GO:0001701">
    <property type="term" value="P:in utero embryonic development"/>
    <property type="evidence" value="ECO:0007669"/>
    <property type="project" value="Ensembl"/>
</dbReference>
<dbReference type="InterPro" id="IPR024833">
    <property type="entry name" value="RESP18"/>
</dbReference>
<dbReference type="InterPro" id="IPR029403">
    <property type="entry name" value="RESP18_dom"/>
</dbReference>
<dbReference type="PANTHER" id="PTHR17314">
    <property type="entry name" value="REGULATED ENDOCRINE SPECIFIC PROTEIN 18"/>
    <property type="match status" value="1"/>
</dbReference>
<dbReference type="PANTHER" id="PTHR17314:SF0">
    <property type="entry name" value="REGULATED ENDOCRINE-SPECIFIC PROTEIN 18"/>
    <property type="match status" value="1"/>
</dbReference>
<dbReference type="Pfam" id="PF14948">
    <property type="entry name" value="RESP18"/>
    <property type="match status" value="1"/>
</dbReference>
<dbReference type="SMART" id="SM01305">
    <property type="entry name" value="RESP18"/>
    <property type="match status" value="1"/>
</dbReference>
<sequence length="174" mass="19458">MQRQLWLGGFRGLWLLVCFLLLNSRLGGSSDVSGHDGQSQVGVGQLWPLPGFTTPVFKHLQVLLQQIMPHDLFWKDDMTQEVMTQKMGRTSKLHPEDPCVRSGPAAFPTRTPGVRGKQEEKLRLLFPKSPMVKVNKDQCFTSKVVSKVLKHEVANPVKGFFESPPTVGHNLVAD</sequence>